<keyword id="KW-0217">Developmental protein</keyword>
<keyword id="KW-0238">DNA-binding</keyword>
<keyword id="KW-0371">Homeobox</keyword>
<keyword id="KW-0539">Nucleus</keyword>
<keyword id="KW-1185">Reference proteome</keyword>
<keyword id="KW-0804">Transcription</keyword>
<keyword id="KW-0805">Transcription regulation</keyword>
<gene>
    <name type="primary">hoxc5</name>
</gene>
<evidence type="ECO:0000255" key="1">
    <source>
        <dbReference type="PROSITE-ProRule" id="PRU00108"/>
    </source>
</evidence>
<evidence type="ECO:0000305" key="2"/>
<sequence>EFRQIYPWMTKLHMSHETDGKRSRTSYTRYQTLELEKEFHFNRYLTRRRRIEIANNLCLNERQIKIWFQNRRMKWKKDTKVKSKDSM</sequence>
<dbReference type="EMBL" id="X07105">
    <property type="protein sequence ID" value="CAA30126.1"/>
    <property type="molecule type" value="mRNA"/>
</dbReference>
<dbReference type="PIR" id="S00589">
    <property type="entry name" value="S00589"/>
</dbReference>
<dbReference type="SMR" id="P09020"/>
<dbReference type="AGR" id="Xenbase:XB-GENE-865541"/>
<dbReference type="Xenbase" id="XB-GENE-865541">
    <property type="gene designation" value="hoxc5.L"/>
</dbReference>
<dbReference type="Proteomes" id="UP000186698">
    <property type="component" value="Unplaced"/>
</dbReference>
<dbReference type="GO" id="GO:0005634">
    <property type="term" value="C:nucleus"/>
    <property type="evidence" value="ECO:0007669"/>
    <property type="project" value="UniProtKB-SubCell"/>
</dbReference>
<dbReference type="GO" id="GO:0000981">
    <property type="term" value="F:DNA-binding transcription factor activity, RNA polymerase II-specific"/>
    <property type="evidence" value="ECO:0007669"/>
    <property type="project" value="InterPro"/>
</dbReference>
<dbReference type="GO" id="GO:0000978">
    <property type="term" value="F:RNA polymerase II cis-regulatory region sequence-specific DNA binding"/>
    <property type="evidence" value="ECO:0007669"/>
    <property type="project" value="TreeGrafter"/>
</dbReference>
<dbReference type="GO" id="GO:0009952">
    <property type="term" value="P:anterior/posterior pattern specification"/>
    <property type="evidence" value="ECO:0007669"/>
    <property type="project" value="TreeGrafter"/>
</dbReference>
<dbReference type="CDD" id="cd00086">
    <property type="entry name" value="homeodomain"/>
    <property type="match status" value="1"/>
</dbReference>
<dbReference type="FunFam" id="1.10.10.60:FF:000055">
    <property type="entry name" value="Homeobox protein Hox-A5"/>
    <property type="match status" value="1"/>
</dbReference>
<dbReference type="Gene3D" id="1.10.10.60">
    <property type="entry name" value="Homeodomain-like"/>
    <property type="match status" value="1"/>
</dbReference>
<dbReference type="InterPro" id="IPR050296">
    <property type="entry name" value="Antp_homeobox"/>
</dbReference>
<dbReference type="InterPro" id="IPR001356">
    <property type="entry name" value="HD"/>
</dbReference>
<dbReference type="InterPro" id="IPR020479">
    <property type="entry name" value="HD_metazoa"/>
</dbReference>
<dbReference type="InterPro" id="IPR017995">
    <property type="entry name" value="Homeobox_antennapedia"/>
</dbReference>
<dbReference type="InterPro" id="IPR001827">
    <property type="entry name" value="Homeobox_Antennapedia_CS"/>
</dbReference>
<dbReference type="InterPro" id="IPR017970">
    <property type="entry name" value="Homeobox_CS"/>
</dbReference>
<dbReference type="InterPro" id="IPR009057">
    <property type="entry name" value="Homeodomain-like_sf"/>
</dbReference>
<dbReference type="PANTHER" id="PTHR45659">
    <property type="entry name" value="HOMEOBOX PROTEIN HOX"/>
    <property type="match status" value="1"/>
</dbReference>
<dbReference type="PANTHER" id="PTHR45659:SF5">
    <property type="entry name" value="HOMEOBOX PROTEIN HOX-C5"/>
    <property type="match status" value="1"/>
</dbReference>
<dbReference type="Pfam" id="PF00046">
    <property type="entry name" value="Homeodomain"/>
    <property type="match status" value="1"/>
</dbReference>
<dbReference type="PRINTS" id="PR00025">
    <property type="entry name" value="ANTENNAPEDIA"/>
</dbReference>
<dbReference type="PRINTS" id="PR00024">
    <property type="entry name" value="HOMEOBOX"/>
</dbReference>
<dbReference type="SMART" id="SM00389">
    <property type="entry name" value="HOX"/>
    <property type="match status" value="1"/>
</dbReference>
<dbReference type="SUPFAM" id="SSF46689">
    <property type="entry name" value="Homeodomain-like"/>
    <property type="match status" value="1"/>
</dbReference>
<dbReference type="PROSITE" id="PS00032">
    <property type="entry name" value="ANTENNAPEDIA"/>
    <property type="match status" value="1"/>
</dbReference>
<dbReference type="PROSITE" id="PS00027">
    <property type="entry name" value="HOMEOBOX_1"/>
    <property type="match status" value="1"/>
</dbReference>
<dbReference type="PROSITE" id="PS50071">
    <property type="entry name" value="HOMEOBOX_2"/>
    <property type="match status" value="1"/>
</dbReference>
<comment type="function">
    <text>Sequence-specific transcription factor which is part of a developmental regulatory system that provides cells with specific positional identities on the anterior-posterior axis.</text>
</comment>
<comment type="subcellular location">
    <subcellularLocation>
        <location>Nucleus</location>
    </subcellularLocation>
</comment>
<comment type="developmental stage">
    <text>Expressed exclusively in early embryos.</text>
</comment>
<comment type="similarity">
    <text evidence="2">Belongs to the Antp homeobox family.</text>
</comment>
<reference key="1">
    <citation type="journal article" date="1988" name="Nucleic Acids Res.">
        <title>Xenopus homeobox-containing cDNAs expressed in early development.</title>
        <authorList>
            <person name="Fritz A."/>
            <person name="De Robertis E.M."/>
        </authorList>
    </citation>
    <scope>NUCLEOTIDE SEQUENCE [MRNA]</scope>
</reference>
<proteinExistence type="evidence at transcript level"/>
<feature type="chain" id="PRO_0000200173" description="Homeobox protein Hox-C5">
    <location>
        <begin position="1" status="less than"/>
        <end position="87"/>
    </location>
</feature>
<feature type="DNA-binding region" description="Homeobox" evidence="1">
    <location>
        <begin position="20"/>
        <end position="79"/>
    </location>
</feature>
<feature type="short sequence motif" description="Antp-type hexapeptide">
    <location>
        <begin position="5"/>
        <end position="10"/>
    </location>
</feature>
<feature type="non-terminal residue">
    <location>
        <position position="1"/>
    </location>
</feature>
<organism>
    <name type="scientific">Xenopus laevis</name>
    <name type="common">African clawed frog</name>
    <dbReference type="NCBI Taxonomy" id="8355"/>
    <lineage>
        <taxon>Eukaryota</taxon>
        <taxon>Metazoa</taxon>
        <taxon>Chordata</taxon>
        <taxon>Craniata</taxon>
        <taxon>Vertebrata</taxon>
        <taxon>Euteleostomi</taxon>
        <taxon>Amphibia</taxon>
        <taxon>Batrachia</taxon>
        <taxon>Anura</taxon>
        <taxon>Pipoidea</taxon>
        <taxon>Pipidae</taxon>
        <taxon>Xenopodinae</taxon>
        <taxon>Xenopus</taxon>
        <taxon>Xenopus</taxon>
    </lineage>
</organism>
<accession>P09020</accession>
<protein>
    <recommendedName>
        <fullName>Homeobox protein Hox-C5</fullName>
    </recommendedName>
    <alternativeName>
        <fullName>XlHbox-5</fullName>
    </alternativeName>
</protein>
<name>HXC5_XENLA</name>